<reference key="1">
    <citation type="submission" date="1997-08" db="EMBL/GenBank/DDBJ databases">
        <authorList>
            <person name="Kilstrup M."/>
        </authorList>
    </citation>
    <scope>NUCLEOTIDE SEQUENCE [GENOMIC DNA]</scope>
</reference>
<reference key="2">
    <citation type="journal article" date="2007" name="J. Bacteriol.">
        <title>The complete genome sequence of the lactic acid bacterial paradigm Lactococcus lactis subsp. cremoris MG1363.</title>
        <authorList>
            <person name="Wegmann U."/>
            <person name="O'Connell-Motherway M."/>
            <person name="Zomer A."/>
            <person name="Buist G."/>
            <person name="Shearman C."/>
            <person name="Canchaya C."/>
            <person name="Ventura M."/>
            <person name="Goesmann A."/>
            <person name="Gasson M.J."/>
            <person name="Kuipers O.P."/>
            <person name="van Sinderen D."/>
            <person name="Kok J."/>
        </authorList>
    </citation>
    <scope>NUCLEOTIDE SEQUENCE [LARGE SCALE GENOMIC DNA]</scope>
    <source>
        <strain>MG1363</strain>
    </source>
</reference>
<reference key="3">
    <citation type="journal article" date="1998" name="J. Bacteriol.">
        <title>A transcriptional activator, homologous to the Bacillus subtilis PurR repressor, is required for expression of purine biosynthetic genes in Lactococcus lactis.</title>
        <authorList>
            <person name="Kilstrup M."/>
            <person name="Martinussen J."/>
        </authorList>
    </citation>
    <scope>FUNCTION</scope>
    <scope>ACTIVITY REGULATION</scope>
    <scope>INDUCTION</scope>
    <scope>DISRUPTION PHENOTYPE</scope>
    <source>
        <strain>MG1363</strain>
    </source>
</reference>
<reference key="4">
    <citation type="journal article" date="2012" name="Microbiology">
        <title>The PurR regulon in Lactococcus lactis - transcriptional regulation of the purine nucleotide metabolism and translational machinery.</title>
        <authorList>
            <person name="Jendresen C.B."/>
            <person name="Martinussen J."/>
            <person name="Kilstrup M."/>
        </authorList>
    </citation>
    <scope>FUNCTION</scope>
    <scope>DNA-BINDING</scope>
    <source>
        <strain>MG1363</strain>
    </source>
</reference>
<keyword id="KW-0010">Activator</keyword>
<keyword id="KW-0238">DNA-binding</keyword>
<keyword id="KW-0804">Transcription</keyword>
<keyword id="KW-0805">Transcription regulation</keyword>
<name>PURR_LACLM</name>
<dbReference type="EMBL" id="AJ222642">
    <property type="protein sequence ID" value="CAA10902.1"/>
    <property type="molecule type" value="Genomic_DNA"/>
</dbReference>
<dbReference type="EMBL" id="AM406671">
    <property type="protein sequence ID" value="CAL99113.1"/>
    <property type="molecule type" value="Genomic_DNA"/>
</dbReference>
<dbReference type="RefSeq" id="WP_010906422.1">
    <property type="nucleotide sequence ID" value="NZ_WJVF01000037.1"/>
</dbReference>
<dbReference type="SMR" id="P0A400"/>
<dbReference type="STRING" id="416870.llmg_2551"/>
<dbReference type="GeneID" id="89634608"/>
<dbReference type="KEGG" id="llm:llmg_2551"/>
<dbReference type="eggNOG" id="COG0503">
    <property type="taxonomic scope" value="Bacteria"/>
</dbReference>
<dbReference type="HOGENOM" id="CLU_088227_0_0_9"/>
<dbReference type="OrthoDB" id="4213751at2"/>
<dbReference type="PhylomeDB" id="P0A400"/>
<dbReference type="Proteomes" id="UP000000364">
    <property type="component" value="Chromosome"/>
</dbReference>
<dbReference type="GO" id="GO:0003677">
    <property type="term" value="F:DNA binding"/>
    <property type="evidence" value="ECO:0007669"/>
    <property type="project" value="UniProtKB-KW"/>
</dbReference>
<dbReference type="GO" id="GO:0045892">
    <property type="term" value="P:negative regulation of DNA-templated transcription"/>
    <property type="evidence" value="ECO:0007669"/>
    <property type="project" value="InterPro"/>
</dbReference>
<dbReference type="GO" id="GO:0045982">
    <property type="term" value="P:negative regulation of purine nucleobase metabolic process"/>
    <property type="evidence" value="ECO:0007669"/>
    <property type="project" value="InterPro"/>
</dbReference>
<dbReference type="CDD" id="cd06223">
    <property type="entry name" value="PRTases_typeI"/>
    <property type="match status" value="1"/>
</dbReference>
<dbReference type="Gene3D" id="3.40.50.2020">
    <property type="match status" value="1"/>
</dbReference>
<dbReference type="Gene3D" id="1.10.10.10">
    <property type="entry name" value="Winged helix-like DNA-binding domain superfamily/Winged helix DNA-binding domain"/>
    <property type="match status" value="1"/>
</dbReference>
<dbReference type="InterPro" id="IPR000836">
    <property type="entry name" value="PRibTrfase_dom"/>
</dbReference>
<dbReference type="InterPro" id="IPR029057">
    <property type="entry name" value="PRTase-like"/>
</dbReference>
<dbReference type="InterPro" id="IPR050118">
    <property type="entry name" value="Pur/Pyrimidine_PRTase"/>
</dbReference>
<dbReference type="InterPro" id="IPR015265">
    <property type="entry name" value="PuR_N"/>
</dbReference>
<dbReference type="InterPro" id="IPR010078">
    <property type="entry name" value="PurR_Bsub"/>
</dbReference>
<dbReference type="InterPro" id="IPR036388">
    <property type="entry name" value="WH-like_DNA-bd_sf"/>
</dbReference>
<dbReference type="InterPro" id="IPR036390">
    <property type="entry name" value="WH_DNA-bd_sf"/>
</dbReference>
<dbReference type="NCBIfam" id="TIGR01743">
    <property type="entry name" value="purR_Bsub"/>
    <property type="match status" value="1"/>
</dbReference>
<dbReference type="PANTHER" id="PTHR43864">
    <property type="entry name" value="HYPOXANTHINE/GUANINE PHOSPHORIBOSYLTRANSFERASE"/>
    <property type="match status" value="1"/>
</dbReference>
<dbReference type="PANTHER" id="PTHR43864:SF2">
    <property type="entry name" value="PUR OPERON REPRESSOR"/>
    <property type="match status" value="1"/>
</dbReference>
<dbReference type="Pfam" id="PF00156">
    <property type="entry name" value="Pribosyltran"/>
    <property type="match status" value="1"/>
</dbReference>
<dbReference type="Pfam" id="PF09182">
    <property type="entry name" value="PuR_N"/>
    <property type="match status" value="1"/>
</dbReference>
<dbReference type="SUPFAM" id="SSF53271">
    <property type="entry name" value="PRTase-like"/>
    <property type="match status" value="1"/>
</dbReference>
<dbReference type="SUPFAM" id="SSF46785">
    <property type="entry name" value="Winged helix' DNA-binding domain"/>
    <property type="match status" value="1"/>
</dbReference>
<sequence>MKRNERLVDFTNFLINHPNQMLNLNELSKHYEVAKSSISEDLVFIKRVFENQGVGLVETFPGSLGGVRFTPYITDERSLEMSQEIAELLREENRILPGGYIYLSDILGTPSNLRKIGQIIAHEYHEKQVDVVMTIATKGIPIAQSVAEILDVPFVIVRRDPKVTEGATLNVNYMSGSSSRVENMTLSKRSLSIGQNVLIVDDFMKGAGTINGMRSLVHEFDCLLAGVAVFLEGPFKGERLIDDYKSILKVDRIDIANRSIDVQLGNIFNDK</sequence>
<proteinExistence type="evidence at protein level"/>
<accession>P0A400</accession>
<accession>A2RP67</accession>
<accession>O53065</accession>
<comment type="function">
    <text evidence="2 3">DNA-binding transcriptional activator that controls the expression of a number of genes involved in the synthesis, metabolism and transport of purines (PubMed:22679106, PubMed:9683488). The PurR regulon also includes genes involved in nucleotide metabolism, C1 compound metabolism, phosphonate transport, pyrophosphatase activity, (p)ppGpp metabolism and translation-related functions (PubMed:22679106). Acts by binding directly to specific DNA sequences, named PurBoxes, in the upstream control regions of affected genes (PubMed:22679106, PubMed:9683488). Required for growth in the absence of exogenous purines (PubMed:9683488).</text>
</comment>
<comment type="activity regulation">
    <text evidence="3">Binds to DNA with both high and low 5-phosphoribosyl 1-pyrophosphate (PRPP) concentrations, but activation is detected only with high PRPP concentrations.</text>
</comment>
<comment type="subunit">
    <text evidence="6">Homodimer.</text>
</comment>
<comment type="induction">
    <text evidence="3">Autoregulated.</text>
</comment>
<comment type="domain">
    <text evidence="1">Contains an N-terminal DNA-binding winged helix-turn-helix domain and a C-terminal regulatory domain (or effector binding domain) resembling phosphoribosyltransferase (PRT) domain (By similarity). However, the PRT domain lacks enzymatic activity and serves a purely regulatory role by binding effector molecules (By similarity).</text>
</comment>
<comment type="disruption phenotype">
    <text evidence="3">Disruption of the gene leads to a purine auxotrophic phenotype.</text>
</comment>
<comment type="similarity">
    <text evidence="5">Belongs to the purine/pyrimidine phosphoribosyltransferase family. PurR subfamily.</text>
</comment>
<feature type="chain" id="PRO_0000139701" description="Purine biosynthesis transcriptional activator PurR">
    <location>
        <begin position="1"/>
        <end position="271"/>
    </location>
</feature>
<feature type="region of interest" description="DNA binding domain" evidence="1">
    <location>
        <begin position="1"/>
        <end position="71"/>
    </location>
</feature>
<feature type="region of interest" description="Effector binding domain" evidence="1">
    <location>
        <begin position="72"/>
        <end position="271"/>
    </location>
</feature>
<evidence type="ECO:0000250" key="1">
    <source>
        <dbReference type="UniProtKB" id="P37551"/>
    </source>
</evidence>
<evidence type="ECO:0000269" key="2">
    <source>
    </source>
</evidence>
<evidence type="ECO:0000269" key="3">
    <source>
    </source>
</evidence>
<evidence type="ECO:0000303" key="4">
    <source>
    </source>
</evidence>
<evidence type="ECO:0000305" key="5"/>
<evidence type="ECO:0000305" key="6">
    <source>
    </source>
</evidence>
<organism>
    <name type="scientific">Lactococcus lactis subsp. cremoris (strain MG1363)</name>
    <dbReference type="NCBI Taxonomy" id="416870"/>
    <lineage>
        <taxon>Bacteria</taxon>
        <taxon>Bacillati</taxon>
        <taxon>Bacillota</taxon>
        <taxon>Bacilli</taxon>
        <taxon>Lactobacillales</taxon>
        <taxon>Streptococcaceae</taxon>
        <taxon>Lactococcus</taxon>
        <taxon>Lactococcus cremoris subsp. cremoris</taxon>
    </lineage>
</organism>
<protein>
    <recommendedName>
        <fullName evidence="5">Purine biosynthesis transcriptional activator PurR</fullName>
    </recommendedName>
</protein>
<gene>
    <name evidence="4" type="primary">purR</name>
    <name type="ordered locus">llmg_2551</name>
</gene>